<gene>
    <name evidence="1" type="primary">rnfB</name>
    <name type="ordered locus">Sama_1831</name>
</gene>
<protein>
    <recommendedName>
        <fullName evidence="1">Ion-translocating oxidoreductase complex subunit B</fullName>
        <ecNumber evidence="1">7.-.-.-</ecNumber>
    </recommendedName>
    <alternativeName>
        <fullName evidence="1">Rnf electron transport complex subunit B</fullName>
    </alternativeName>
</protein>
<accession>A1S6N0</accession>
<dbReference type="EC" id="7.-.-.-" evidence="1"/>
<dbReference type="EMBL" id="CP000507">
    <property type="protein sequence ID" value="ABM00037.1"/>
    <property type="molecule type" value="Genomic_DNA"/>
</dbReference>
<dbReference type="STRING" id="326297.Sama_1831"/>
<dbReference type="KEGG" id="saz:Sama_1831"/>
<dbReference type="eggNOG" id="COG2878">
    <property type="taxonomic scope" value="Bacteria"/>
</dbReference>
<dbReference type="HOGENOM" id="CLU_063448_2_0_6"/>
<dbReference type="OrthoDB" id="9789936at2"/>
<dbReference type="Proteomes" id="UP000009175">
    <property type="component" value="Chromosome"/>
</dbReference>
<dbReference type="GO" id="GO:0005886">
    <property type="term" value="C:plasma membrane"/>
    <property type="evidence" value="ECO:0007669"/>
    <property type="project" value="UniProtKB-SubCell"/>
</dbReference>
<dbReference type="GO" id="GO:0051539">
    <property type="term" value="F:4 iron, 4 sulfur cluster binding"/>
    <property type="evidence" value="ECO:0007669"/>
    <property type="project" value="UniProtKB-UniRule"/>
</dbReference>
<dbReference type="GO" id="GO:0009055">
    <property type="term" value="F:electron transfer activity"/>
    <property type="evidence" value="ECO:0007669"/>
    <property type="project" value="InterPro"/>
</dbReference>
<dbReference type="GO" id="GO:0046872">
    <property type="term" value="F:metal ion binding"/>
    <property type="evidence" value="ECO:0007669"/>
    <property type="project" value="UniProtKB-KW"/>
</dbReference>
<dbReference type="GO" id="GO:0022900">
    <property type="term" value="P:electron transport chain"/>
    <property type="evidence" value="ECO:0007669"/>
    <property type="project" value="UniProtKB-UniRule"/>
</dbReference>
<dbReference type="FunFam" id="1.10.15.40:FF:000001">
    <property type="entry name" value="Ion-translocating oxidoreductase complex subunit B"/>
    <property type="match status" value="1"/>
</dbReference>
<dbReference type="Gene3D" id="3.30.70.20">
    <property type="match status" value="2"/>
</dbReference>
<dbReference type="Gene3D" id="1.10.15.40">
    <property type="entry name" value="Electron transport complex subunit B, putative Fe-S cluster"/>
    <property type="match status" value="1"/>
</dbReference>
<dbReference type="HAMAP" id="MF_00463">
    <property type="entry name" value="RsxB_RnfB"/>
    <property type="match status" value="1"/>
</dbReference>
<dbReference type="InterPro" id="IPR007202">
    <property type="entry name" value="4Fe-4S_dom"/>
</dbReference>
<dbReference type="InterPro" id="IPR017896">
    <property type="entry name" value="4Fe4S_Fe-S-bd"/>
</dbReference>
<dbReference type="InterPro" id="IPR017900">
    <property type="entry name" value="4Fe4S_Fe_S_CS"/>
</dbReference>
<dbReference type="InterPro" id="IPR010207">
    <property type="entry name" value="Elect_transpt_cplx_RnfB/RsxB"/>
</dbReference>
<dbReference type="InterPro" id="IPR016463">
    <property type="entry name" value="RnfB/RsxB_Proteobac"/>
</dbReference>
<dbReference type="InterPro" id="IPR050294">
    <property type="entry name" value="RnfB_subfamily"/>
</dbReference>
<dbReference type="NCBIfam" id="NF003475">
    <property type="entry name" value="PRK05113.1"/>
    <property type="match status" value="1"/>
</dbReference>
<dbReference type="NCBIfam" id="TIGR01944">
    <property type="entry name" value="rnfB"/>
    <property type="match status" value="1"/>
</dbReference>
<dbReference type="PANTHER" id="PTHR42859:SF3">
    <property type="entry name" value="ION-TRANSLOCATING OXIDOREDUCTASE COMPLEX SUBUNIT B"/>
    <property type="match status" value="1"/>
</dbReference>
<dbReference type="PANTHER" id="PTHR42859">
    <property type="entry name" value="OXIDOREDUCTASE"/>
    <property type="match status" value="1"/>
</dbReference>
<dbReference type="Pfam" id="PF14697">
    <property type="entry name" value="Fer4_21"/>
    <property type="match status" value="1"/>
</dbReference>
<dbReference type="Pfam" id="PF04060">
    <property type="entry name" value="FeS"/>
    <property type="match status" value="1"/>
</dbReference>
<dbReference type="PIRSF" id="PIRSF005784">
    <property type="entry name" value="Elect_transpt_RnfB"/>
    <property type="match status" value="1"/>
</dbReference>
<dbReference type="SUPFAM" id="SSF54862">
    <property type="entry name" value="4Fe-4S ferredoxins"/>
    <property type="match status" value="1"/>
</dbReference>
<dbReference type="PROSITE" id="PS51656">
    <property type="entry name" value="4FE4S"/>
    <property type="match status" value="1"/>
</dbReference>
<dbReference type="PROSITE" id="PS00198">
    <property type="entry name" value="4FE4S_FER_1"/>
    <property type="match status" value="2"/>
</dbReference>
<dbReference type="PROSITE" id="PS51379">
    <property type="entry name" value="4FE4S_FER_2"/>
    <property type="match status" value="2"/>
</dbReference>
<comment type="function">
    <text evidence="1">Part of a membrane-bound complex that couples electron transfer with translocation of ions across the membrane.</text>
</comment>
<comment type="cofactor">
    <cofactor evidence="1">
        <name>[4Fe-4S] cluster</name>
        <dbReference type="ChEBI" id="CHEBI:49883"/>
    </cofactor>
    <text evidence="1">Binds 3 [4Fe-4S] clusters.</text>
</comment>
<comment type="subunit">
    <text evidence="1">The complex is composed of six subunits: RnfA, RnfB, RnfC, RnfD, RnfE and RnfG.</text>
</comment>
<comment type="subcellular location">
    <subcellularLocation>
        <location evidence="1">Cell inner membrane</location>
    </subcellularLocation>
</comment>
<comment type="similarity">
    <text evidence="1">Belongs to the 4Fe4S bacterial-type ferredoxin family. RnfB subfamily.</text>
</comment>
<feature type="chain" id="PRO_1000013652" description="Ion-translocating oxidoreductase complex subunit B">
    <location>
        <begin position="1"/>
        <end position="189"/>
    </location>
</feature>
<feature type="domain" description="4Fe-4S" evidence="1">
    <location>
        <begin position="32"/>
        <end position="90"/>
    </location>
</feature>
<feature type="domain" description="4Fe-4S ferredoxin-type 1" evidence="1">
    <location>
        <begin position="105"/>
        <end position="134"/>
    </location>
</feature>
<feature type="domain" description="4Fe-4S ferredoxin-type 2" evidence="1">
    <location>
        <begin position="136"/>
        <end position="164"/>
    </location>
</feature>
<feature type="region of interest" description="Hydrophobic" evidence="1">
    <location>
        <begin position="1"/>
        <end position="26"/>
    </location>
</feature>
<feature type="binding site" evidence="1">
    <location>
        <position position="49"/>
    </location>
    <ligand>
        <name>[4Fe-4S] cluster</name>
        <dbReference type="ChEBI" id="CHEBI:49883"/>
        <label>1</label>
    </ligand>
</feature>
<feature type="binding site" evidence="1">
    <location>
        <position position="52"/>
    </location>
    <ligand>
        <name>[4Fe-4S] cluster</name>
        <dbReference type="ChEBI" id="CHEBI:49883"/>
        <label>1</label>
    </ligand>
</feature>
<feature type="binding site" evidence="1">
    <location>
        <position position="57"/>
    </location>
    <ligand>
        <name>[4Fe-4S] cluster</name>
        <dbReference type="ChEBI" id="CHEBI:49883"/>
        <label>1</label>
    </ligand>
</feature>
<feature type="binding site" evidence="1">
    <location>
        <position position="73"/>
    </location>
    <ligand>
        <name>[4Fe-4S] cluster</name>
        <dbReference type="ChEBI" id="CHEBI:49883"/>
        <label>1</label>
    </ligand>
</feature>
<feature type="binding site" evidence="1">
    <location>
        <position position="114"/>
    </location>
    <ligand>
        <name>[4Fe-4S] cluster</name>
        <dbReference type="ChEBI" id="CHEBI:49883"/>
        <label>2</label>
    </ligand>
</feature>
<feature type="binding site" evidence="1">
    <location>
        <position position="117"/>
    </location>
    <ligand>
        <name>[4Fe-4S] cluster</name>
        <dbReference type="ChEBI" id="CHEBI:49883"/>
        <label>2</label>
    </ligand>
</feature>
<feature type="binding site" evidence="1">
    <location>
        <position position="120"/>
    </location>
    <ligand>
        <name>[4Fe-4S] cluster</name>
        <dbReference type="ChEBI" id="CHEBI:49883"/>
        <label>2</label>
    </ligand>
</feature>
<feature type="binding site" evidence="1">
    <location>
        <position position="124"/>
    </location>
    <ligand>
        <name>[4Fe-4S] cluster</name>
        <dbReference type="ChEBI" id="CHEBI:49883"/>
        <label>3</label>
    </ligand>
</feature>
<feature type="binding site" evidence="1">
    <location>
        <position position="144"/>
    </location>
    <ligand>
        <name>[4Fe-4S] cluster</name>
        <dbReference type="ChEBI" id="CHEBI:49883"/>
        <label>3</label>
    </ligand>
</feature>
<feature type="binding site" evidence="1">
    <location>
        <position position="147"/>
    </location>
    <ligand>
        <name>[4Fe-4S] cluster</name>
        <dbReference type="ChEBI" id="CHEBI:49883"/>
        <label>3</label>
    </ligand>
</feature>
<feature type="binding site" evidence="1">
    <location>
        <position position="150"/>
    </location>
    <ligand>
        <name>[4Fe-4S] cluster</name>
        <dbReference type="ChEBI" id="CHEBI:49883"/>
        <label>3</label>
    </ligand>
</feature>
<feature type="binding site" evidence="1">
    <location>
        <position position="154"/>
    </location>
    <ligand>
        <name>[4Fe-4S] cluster</name>
        <dbReference type="ChEBI" id="CHEBI:49883"/>
        <label>2</label>
    </ligand>
</feature>
<keyword id="KW-0004">4Fe-4S</keyword>
<keyword id="KW-0997">Cell inner membrane</keyword>
<keyword id="KW-1003">Cell membrane</keyword>
<keyword id="KW-0249">Electron transport</keyword>
<keyword id="KW-0408">Iron</keyword>
<keyword id="KW-0411">Iron-sulfur</keyword>
<keyword id="KW-0472">Membrane</keyword>
<keyword id="KW-0479">Metal-binding</keyword>
<keyword id="KW-1185">Reference proteome</keyword>
<keyword id="KW-0677">Repeat</keyword>
<keyword id="KW-1278">Translocase</keyword>
<keyword id="KW-0813">Transport</keyword>
<evidence type="ECO:0000255" key="1">
    <source>
        <dbReference type="HAMAP-Rule" id="MF_00463"/>
    </source>
</evidence>
<name>RNFB_SHEAM</name>
<organism>
    <name type="scientific">Shewanella amazonensis (strain ATCC BAA-1098 / SB2B)</name>
    <dbReference type="NCBI Taxonomy" id="326297"/>
    <lineage>
        <taxon>Bacteria</taxon>
        <taxon>Pseudomonadati</taxon>
        <taxon>Pseudomonadota</taxon>
        <taxon>Gammaproteobacteria</taxon>
        <taxon>Alteromonadales</taxon>
        <taxon>Shewanellaceae</taxon>
        <taxon>Shewanella</taxon>
    </lineage>
</organism>
<reference key="1">
    <citation type="submission" date="2006-12" db="EMBL/GenBank/DDBJ databases">
        <title>Complete sequence of Shewanella amazonensis SB2B.</title>
        <authorList>
            <consortium name="US DOE Joint Genome Institute"/>
            <person name="Copeland A."/>
            <person name="Lucas S."/>
            <person name="Lapidus A."/>
            <person name="Barry K."/>
            <person name="Detter J.C."/>
            <person name="Glavina del Rio T."/>
            <person name="Hammon N."/>
            <person name="Israni S."/>
            <person name="Dalin E."/>
            <person name="Tice H."/>
            <person name="Pitluck S."/>
            <person name="Munk A.C."/>
            <person name="Brettin T."/>
            <person name="Bruce D."/>
            <person name="Han C."/>
            <person name="Tapia R."/>
            <person name="Gilna P."/>
            <person name="Schmutz J."/>
            <person name="Larimer F."/>
            <person name="Land M."/>
            <person name="Hauser L."/>
            <person name="Kyrpides N."/>
            <person name="Mikhailova N."/>
            <person name="Fredrickson J."/>
            <person name="Richardson P."/>
        </authorList>
    </citation>
    <scope>NUCLEOTIDE SEQUENCE [LARGE SCALE GENOMIC DNA]</scope>
    <source>
        <strain>ATCC BAA-1098 / SB2B</strain>
    </source>
</reference>
<proteinExistence type="inferred from homology"/>
<sequence>MSAVMIAVVLLGLLALVFGAILGFAAVKFRVEGDPLVDQVESLLPQTQCGQCGYPGCRPYAEAIAGGDQINKCPPGGTATMEKIAELMGVEPQPLSATTEQQVKKVAYIREDECIGCTKCIQACPVDAIVGAGKLMHTVITQDCTGCDLCVEPCPVDCIDMLPVTQDIKTWNWKLSAIPVMQLEEDKQC</sequence>